<keyword id="KW-1015">Disulfide bond</keyword>
<keyword id="KW-0960">Knottin</keyword>
<keyword id="KW-0528">Neurotoxin</keyword>
<keyword id="KW-0964">Secreted</keyword>
<keyword id="KW-0732">Signal</keyword>
<keyword id="KW-0800">Toxin</keyword>
<accession>P0C905</accession>
<reference key="1">
    <citation type="journal article" date="2008" name="Mol. Ecol.">
        <title>Evolution of ecological specialization and venom of a predatory marine gastropod.</title>
        <authorList>
            <person name="Remigio E.A."/>
            <person name="Duda T.F. Jr."/>
        </authorList>
    </citation>
    <scope>NUCLEOTIDE SEQUENCE [GENOMIC DNA]</scope>
</reference>
<proteinExistence type="inferred from homology"/>
<feature type="signal peptide" evidence="3">
    <location>
        <begin position="1"/>
        <end position="22"/>
    </location>
</feature>
<feature type="propeptide" id="PRO_0000368010" evidence="6">
    <location>
        <begin position="23"/>
        <end position="51"/>
    </location>
</feature>
<feature type="peptide" id="PRO_0000368011" description="Conotoxin Leo-O4" evidence="6">
    <location>
        <begin position="52"/>
        <end position="79"/>
    </location>
</feature>
<feature type="disulfide bond" evidence="2">
    <location>
        <begin position="53"/>
        <end position="70"/>
    </location>
</feature>
<feature type="disulfide bond" evidence="2">
    <location>
        <begin position="60"/>
        <end position="74"/>
    </location>
</feature>
<feature type="disulfide bond" evidence="2">
    <location>
        <begin position="69"/>
        <end position="78"/>
    </location>
</feature>
<comment type="subcellular location">
    <subcellularLocation>
        <location evidence="6">Secreted</location>
    </subcellularLocation>
</comment>
<comment type="tissue specificity">
    <text evidence="6">Expressed by the venom duct.</text>
</comment>
<comment type="domain">
    <text evidence="1">The presence of a 'disulfide through disulfide knot' structurally defines this protein as a knottin.</text>
</comment>
<comment type="domain">
    <text evidence="5">The cysteine framework is VI/VII (C-C-CC-C-C).</text>
</comment>
<comment type="similarity">
    <text evidence="5">Belongs to the conotoxin O1 superfamily.</text>
</comment>
<evidence type="ECO:0000250" key="1"/>
<evidence type="ECO:0000250" key="2">
    <source>
        <dbReference type="UniProtKB" id="P18511"/>
    </source>
</evidence>
<evidence type="ECO:0000255" key="3"/>
<evidence type="ECO:0000303" key="4">
    <source>
    </source>
</evidence>
<evidence type="ECO:0000305" key="5"/>
<evidence type="ECO:0000305" key="6">
    <source>
    </source>
</evidence>
<protein>
    <recommendedName>
        <fullName evidence="4">Conotoxin Leo-O4</fullName>
    </recommendedName>
</protein>
<organism>
    <name type="scientific">Conus leopardus</name>
    <name type="common">Leopard cone</name>
    <dbReference type="NCBI Taxonomy" id="101306"/>
    <lineage>
        <taxon>Eukaryota</taxon>
        <taxon>Metazoa</taxon>
        <taxon>Spiralia</taxon>
        <taxon>Lophotrochozoa</taxon>
        <taxon>Mollusca</taxon>
        <taxon>Gastropoda</taxon>
        <taxon>Caenogastropoda</taxon>
        <taxon>Neogastropoda</taxon>
        <taxon>Conoidea</taxon>
        <taxon>Conidae</taxon>
        <taxon>Conus</taxon>
        <taxon>Lithoconus</taxon>
    </lineage>
</organism>
<sequence>MKLTCMMLVAVLFLTAWTFVTANVSRNGLENLFPEERHEMMNPNAAKLNNRDCVKAGTACGFPKPEPACCSSWCIFVCT</sequence>
<dbReference type="EMBL" id="EF467319">
    <property type="status" value="NOT_ANNOTATED_CDS"/>
    <property type="molecule type" value="Genomic_DNA"/>
</dbReference>
<dbReference type="ConoServer" id="3717">
    <property type="toxin name" value="Lp6.3 precursor"/>
</dbReference>
<dbReference type="GO" id="GO:0005576">
    <property type="term" value="C:extracellular region"/>
    <property type="evidence" value="ECO:0007669"/>
    <property type="project" value="UniProtKB-SubCell"/>
</dbReference>
<dbReference type="GO" id="GO:0008200">
    <property type="term" value="F:ion channel inhibitor activity"/>
    <property type="evidence" value="ECO:0007669"/>
    <property type="project" value="InterPro"/>
</dbReference>
<dbReference type="GO" id="GO:0090729">
    <property type="term" value="F:toxin activity"/>
    <property type="evidence" value="ECO:0007669"/>
    <property type="project" value="UniProtKB-KW"/>
</dbReference>
<dbReference type="InterPro" id="IPR004214">
    <property type="entry name" value="Conotoxin"/>
</dbReference>
<dbReference type="Pfam" id="PF02950">
    <property type="entry name" value="Conotoxin"/>
    <property type="match status" value="1"/>
</dbReference>
<name>O164_CONLE</name>